<feature type="signal peptide" evidence="2">
    <location>
        <begin position="1"/>
        <end position="21"/>
    </location>
</feature>
<feature type="propeptide" id="PRO_0000370671" evidence="8">
    <location>
        <begin position="22"/>
        <end position="48"/>
    </location>
</feature>
<feature type="peptide" id="PRO_0000370672" description="Alpha-conotoxin-like Qc1.2" evidence="8">
    <location>
        <begin position="49"/>
        <end position="62"/>
    </location>
</feature>
<feature type="modified residue" description="Pyrrolidone carboxylic acid" evidence="8">
    <location>
        <position position="49"/>
    </location>
</feature>
<feature type="disulfide bond" evidence="1">
    <location>
        <begin position="50"/>
        <end position="56"/>
    </location>
</feature>
<feature type="disulfide bond" evidence="1">
    <location>
        <begin position="51"/>
        <end position="61"/>
    </location>
</feature>
<feature type="sequence conflict" description="In Ref. 2." evidence="6" ref="2">
    <original>M</original>
    <variation>I</variation>
    <location>
        <position position="6"/>
    </location>
</feature>
<proteinExistence type="evidence at protein level"/>
<name>CA12_CONQU</name>
<sequence>MGMRMMFTVFLLVALATTVASFTLDRASNGRNAAADDKPSDWIALAIKQCCANPPCKHVNCR</sequence>
<accession>Q6PTD6</accession>
<accession>A1X8C7</accession>
<organism>
    <name type="scientific">Conus quercinus</name>
    <name type="common">Oak cone</name>
    <dbReference type="NCBI Taxonomy" id="101313"/>
    <lineage>
        <taxon>Eukaryota</taxon>
        <taxon>Metazoa</taxon>
        <taxon>Spiralia</taxon>
        <taxon>Lophotrochozoa</taxon>
        <taxon>Mollusca</taxon>
        <taxon>Gastropoda</taxon>
        <taxon>Caenogastropoda</taxon>
        <taxon>Neogastropoda</taxon>
        <taxon>Conoidea</taxon>
        <taxon>Conidae</taxon>
        <taxon>Conus</taxon>
        <taxon>Lividoconus</taxon>
    </lineage>
</organism>
<reference key="1">
    <citation type="journal article" date="2007" name="Toxicon">
        <title>From the identification of gene organization of alpha conotoxins to the cloning of novel toxins.</title>
        <authorList>
            <person name="Yuan D.-D."/>
            <person name="Han Y.-H."/>
            <person name="Wang C.-G."/>
            <person name="Chi C.-W."/>
        </authorList>
    </citation>
    <scope>NUCLEOTIDE SEQUENCE [GENOMIC DNA / MRNA]</scope>
    <source>
        <tissue>Venom duct</tissue>
    </source>
</reference>
<reference key="2">
    <citation type="journal article" date="2019" name="Mar. Drugs">
        <title>High-throughput identification and analysis of novel conotoxins from three vermivorous cone snails by transcriptome sequencing.</title>
        <authorList>
            <person name="Yao G."/>
            <person name="Peng C."/>
            <person name="Zhu Y."/>
            <person name="Fan C."/>
            <person name="Jiang H."/>
            <person name="Chen J."/>
            <person name="Cao Y."/>
            <person name="Shi Q."/>
        </authorList>
    </citation>
    <scope>NUCLEOTIDE SEQUENCE [MRNA]</scope>
    <source>
        <tissue>Venom duct</tissue>
    </source>
</reference>
<reference key="3">
    <citation type="journal article" date="2009" name="Acta Biochim. Biophys. Sin.">
        <title>Characterization of a novel alpha4/4-conotoxin, Qc1.2, from vermivorous Conus quercinus.</title>
        <authorList>
            <person name="Peng C."/>
            <person name="Chen W."/>
            <person name="Han Y."/>
            <person name="Sanders T."/>
            <person name="Chew G."/>
            <person name="Liu J."/>
            <person name="Hawrot E."/>
            <person name="Chi C.-W."/>
            <person name="Wang C.-G."/>
        </authorList>
    </citation>
    <scope>FUNCTION</scope>
    <scope>SYNTHESIS OF 49-62</scope>
    <scope>PYROGLUTAMATE FORMATION AT GLN-49</scope>
</reference>
<comment type="function">
    <text evidence="3">Alpha-conotoxins bind to the nicotinic acetylcholine receptors (nAChR) and inhibit them. This synthetic peptide (10 uM) selectively, but weakly inhibits both rat neuronal alpha-3-beta-2/CHRNA3-CHRNB2 (63%) and alpha-3-beta-4/CHRNA3-CHRNB4 (37%) subtypes of nAChR.</text>
</comment>
<comment type="subcellular location">
    <subcellularLocation>
        <location evidence="7">Secreted</location>
    </subcellularLocation>
</comment>
<comment type="tissue specificity">
    <text evidence="7">Expressed by the venom duct.</text>
</comment>
<comment type="domain">
    <text evidence="6">The cysteine framework is I (CC-C-C). Alpha4/4 pattern.</text>
</comment>
<comment type="similarity">
    <text evidence="6">Belongs to the conotoxin A superfamily.</text>
</comment>
<keyword id="KW-0008">Acetylcholine receptor inhibiting toxin</keyword>
<keyword id="KW-1015">Disulfide bond</keyword>
<keyword id="KW-0872">Ion channel impairing toxin</keyword>
<keyword id="KW-0528">Neurotoxin</keyword>
<keyword id="KW-0629">Postsynaptic neurotoxin</keyword>
<keyword id="KW-0873">Pyrrolidone carboxylic acid</keyword>
<keyword id="KW-0964">Secreted</keyword>
<keyword id="KW-0732">Signal</keyword>
<keyword id="KW-0800">Toxin</keyword>
<evidence type="ECO:0000250" key="1">
    <source>
        <dbReference type="UniProtKB" id="P69657"/>
    </source>
</evidence>
<evidence type="ECO:0000255" key="2"/>
<evidence type="ECO:0000269" key="3">
    <source>
    </source>
</evidence>
<evidence type="ECO:0000303" key="4">
    <source>
    </source>
</evidence>
<evidence type="ECO:0000303" key="5">
    <source>
    </source>
</evidence>
<evidence type="ECO:0000305" key="6"/>
<evidence type="ECO:0000305" key="7">
    <source>
    </source>
</evidence>
<evidence type="ECO:0000305" key="8">
    <source>
    </source>
</evidence>
<protein>
    <recommendedName>
        <fullName evidence="4">Alpha-conotoxin-like Qc1.2</fullName>
    </recommendedName>
    <alternativeName>
        <fullName evidence="5">Qu-3</fullName>
    </alternativeName>
</protein>
<dbReference type="EMBL" id="AY580320">
    <property type="protein sequence ID" value="AAS93423.1"/>
    <property type="molecule type" value="mRNA"/>
</dbReference>
<dbReference type="EMBL" id="DQ311067">
    <property type="protein sequence ID" value="ABD33859.1"/>
    <property type="molecule type" value="Genomic_DNA"/>
</dbReference>
<dbReference type="ConoServer" id="118">
    <property type="toxin name" value="Qc1.2 precursor"/>
</dbReference>
<dbReference type="ConoServer" id="557">
    <property type="toxin name" value="Qc1.2 precursor"/>
</dbReference>
<dbReference type="GO" id="GO:0005576">
    <property type="term" value="C:extracellular region"/>
    <property type="evidence" value="ECO:0007669"/>
    <property type="project" value="UniProtKB-SubCell"/>
</dbReference>
<dbReference type="GO" id="GO:0035792">
    <property type="term" value="C:host cell postsynaptic membrane"/>
    <property type="evidence" value="ECO:0007669"/>
    <property type="project" value="UniProtKB-KW"/>
</dbReference>
<dbReference type="GO" id="GO:0030550">
    <property type="term" value="F:acetylcholine receptor inhibitor activity"/>
    <property type="evidence" value="ECO:0007669"/>
    <property type="project" value="UniProtKB-KW"/>
</dbReference>
<dbReference type="GO" id="GO:0099106">
    <property type="term" value="F:ion channel regulator activity"/>
    <property type="evidence" value="ECO:0007669"/>
    <property type="project" value="UniProtKB-KW"/>
</dbReference>
<dbReference type="GO" id="GO:0090729">
    <property type="term" value="F:toxin activity"/>
    <property type="evidence" value="ECO:0007669"/>
    <property type="project" value="UniProtKB-KW"/>
</dbReference>
<dbReference type="InterPro" id="IPR009958">
    <property type="entry name" value="Conotoxin_a-typ"/>
</dbReference>
<dbReference type="Pfam" id="PF07365">
    <property type="entry name" value="Toxin_8"/>
    <property type="match status" value="1"/>
</dbReference>